<sequence length="533" mass="61282">MATSFRTASCWGLLSFKDISMEFTWDEWQLLDSTQKYLYRDVILENYHNLISVGYHGTKPDLIFKLEQGEDPWIINAKISRQSCPDGWEEWYQNNQDELESIERSYACSVLGRLNLSKTHDSSRQRLYNTRGKSLTQNSAPSRSYLRKNPDKFHGYEEPYFLKHQRAHSIEKNCVCSECGKAFRCKSQLIVHLRIHTGERPYECSKCERAFSAKSNLNAHQRVHTGEKPYSCSECEKVFSFRSQLIVHQEIHTGGKPYGCSECGKAYSWKSQLLLHQRSHTGVKPYECSECGKAFSLKSPFVVHQRTHTGVKPHKCSECGKAFRSKSYLLVHIRMHTGEKPYQCSDCGKAFNMKTQLIVHQGVHTGNNPYQCGECGKAFGRKEQLTAHLRAHAGEKPYGCSECGKAFSSKSYLVIHRRTHTGERPYECSLCERAFCGKSQLIIHQRTHSTEKPYECNECEKAYPRKASLQIHQKTHSGEKPFKCSECGKAFTQKSSLSEHQRVHTGEKPWKCSECGKSFCWNSGLRIHRKTHK</sequence>
<keyword id="KW-0238">DNA-binding</keyword>
<keyword id="KW-0479">Metal-binding</keyword>
<keyword id="KW-0539">Nucleus</keyword>
<keyword id="KW-1267">Proteomics identification</keyword>
<keyword id="KW-1185">Reference proteome</keyword>
<keyword id="KW-0677">Repeat</keyword>
<keyword id="KW-0804">Transcription</keyword>
<keyword id="KW-0805">Transcription regulation</keyword>
<keyword id="KW-0862">Zinc</keyword>
<keyword id="KW-0863">Zinc-finger</keyword>
<reference key="1">
    <citation type="journal article" date="2006" name="Nature">
        <title>The finished DNA sequence of human chromosome 12.</title>
        <authorList>
            <person name="Scherer S.E."/>
            <person name="Muzny D.M."/>
            <person name="Buhay C.J."/>
            <person name="Chen R."/>
            <person name="Cree A."/>
            <person name="Ding Y."/>
            <person name="Dugan-Rocha S."/>
            <person name="Gill R."/>
            <person name="Gunaratne P."/>
            <person name="Harris R.A."/>
            <person name="Hawes A.C."/>
            <person name="Hernandez J."/>
            <person name="Hodgson A.V."/>
            <person name="Hume J."/>
            <person name="Jackson A."/>
            <person name="Khan Z.M."/>
            <person name="Kovar-Smith C."/>
            <person name="Lewis L.R."/>
            <person name="Lozado R.J."/>
            <person name="Metzker M.L."/>
            <person name="Milosavljevic A."/>
            <person name="Miner G.R."/>
            <person name="Montgomery K.T."/>
            <person name="Morgan M.B."/>
            <person name="Nazareth L.V."/>
            <person name="Scott G."/>
            <person name="Sodergren E."/>
            <person name="Song X.-Z."/>
            <person name="Steffen D."/>
            <person name="Lovering R.C."/>
            <person name="Wheeler D.A."/>
            <person name="Worley K.C."/>
            <person name="Yuan Y."/>
            <person name="Zhang Z."/>
            <person name="Adams C.Q."/>
            <person name="Ansari-Lari M.A."/>
            <person name="Ayele M."/>
            <person name="Brown M.J."/>
            <person name="Chen G."/>
            <person name="Chen Z."/>
            <person name="Clerc-Blankenburg K.P."/>
            <person name="Davis C."/>
            <person name="Delgado O."/>
            <person name="Dinh H.H."/>
            <person name="Draper H."/>
            <person name="Gonzalez-Garay M.L."/>
            <person name="Havlak P."/>
            <person name="Jackson L.R."/>
            <person name="Jacob L.S."/>
            <person name="Kelly S.H."/>
            <person name="Li L."/>
            <person name="Li Z."/>
            <person name="Liu J."/>
            <person name="Liu W."/>
            <person name="Lu J."/>
            <person name="Maheshwari M."/>
            <person name="Nguyen B.-V."/>
            <person name="Okwuonu G.O."/>
            <person name="Pasternak S."/>
            <person name="Perez L.M."/>
            <person name="Plopper F.J.H."/>
            <person name="Santibanez J."/>
            <person name="Shen H."/>
            <person name="Tabor P.E."/>
            <person name="Verduzco D."/>
            <person name="Waldron L."/>
            <person name="Wang Q."/>
            <person name="Williams G.A."/>
            <person name="Zhang J."/>
            <person name="Zhou J."/>
            <person name="Allen C.C."/>
            <person name="Amin A.G."/>
            <person name="Anyalebechi V."/>
            <person name="Bailey M."/>
            <person name="Barbaria J.A."/>
            <person name="Bimage K.E."/>
            <person name="Bryant N.P."/>
            <person name="Burch P.E."/>
            <person name="Burkett C.E."/>
            <person name="Burrell K.L."/>
            <person name="Calderon E."/>
            <person name="Cardenas V."/>
            <person name="Carter K."/>
            <person name="Casias K."/>
            <person name="Cavazos I."/>
            <person name="Cavazos S.R."/>
            <person name="Ceasar H."/>
            <person name="Chacko J."/>
            <person name="Chan S.N."/>
            <person name="Chavez D."/>
            <person name="Christopoulos C."/>
            <person name="Chu J."/>
            <person name="Cockrell R."/>
            <person name="Cox C.D."/>
            <person name="Dang M."/>
            <person name="Dathorne S.R."/>
            <person name="David R."/>
            <person name="Davis C.M."/>
            <person name="Davy-Carroll L."/>
            <person name="Deshazo D.R."/>
            <person name="Donlin J.E."/>
            <person name="D'Souza L."/>
            <person name="Eaves K.A."/>
            <person name="Egan A."/>
            <person name="Emery-Cohen A.J."/>
            <person name="Escotto M."/>
            <person name="Flagg N."/>
            <person name="Forbes L.D."/>
            <person name="Gabisi A.M."/>
            <person name="Garza M."/>
            <person name="Hamilton C."/>
            <person name="Henderson N."/>
            <person name="Hernandez O."/>
            <person name="Hines S."/>
            <person name="Hogues M.E."/>
            <person name="Huang M."/>
            <person name="Idlebird D.G."/>
            <person name="Johnson R."/>
            <person name="Jolivet A."/>
            <person name="Jones S."/>
            <person name="Kagan R."/>
            <person name="King L.M."/>
            <person name="Leal B."/>
            <person name="Lebow H."/>
            <person name="Lee S."/>
            <person name="LeVan J.M."/>
            <person name="Lewis L.C."/>
            <person name="London P."/>
            <person name="Lorensuhewa L.M."/>
            <person name="Loulseged H."/>
            <person name="Lovett D.A."/>
            <person name="Lucier A."/>
            <person name="Lucier R.L."/>
            <person name="Ma J."/>
            <person name="Madu R.C."/>
            <person name="Mapua P."/>
            <person name="Martindale A.D."/>
            <person name="Martinez E."/>
            <person name="Massey E."/>
            <person name="Mawhiney S."/>
            <person name="Meador M.G."/>
            <person name="Mendez S."/>
            <person name="Mercado C."/>
            <person name="Mercado I.C."/>
            <person name="Merritt C.E."/>
            <person name="Miner Z.L."/>
            <person name="Minja E."/>
            <person name="Mitchell T."/>
            <person name="Mohabbat F."/>
            <person name="Mohabbat K."/>
            <person name="Montgomery B."/>
            <person name="Moore N."/>
            <person name="Morris S."/>
            <person name="Munidasa M."/>
            <person name="Ngo R.N."/>
            <person name="Nguyen N.B."/>
            <person name="Nickerson E."/>
            <person name="Nwaokelemeh O.O."/>
            <person name="Nwokenkwo S."/>
            <person name="Obregon M."/>
            <person name="Oguh M."/>
            <person name="Oragunye N."/>
            <person name="Oviedo R.J."/>
            <person name="Parish B.J."/>
            <person name="Parker D.N."/>
            <person name="Parrish J."/>
            <person name="Parks K.L."/>
            <person name="Paul H.A."/>
            <person name="Payton B.A."/>
            <person name="Perez A."/>
            <person name="Perrin W."/>
            <person name="Pickens A."/>
            <person name="Primus E.L."/>
            <person name="Pu L.-L."/>
            <person name="Puazo M."/>
            <person name="Quiles M.M."/>
            <person name="Quiroz J.B."/>
            <person name="Rabata D."/>
            <person name="Reeves K."/>
            <person name="Ruiz S.J."/>
            <person name="Shao H."/>
            <person name="Sisson I."/>
            <person name="Sonaike T."/>
            <person name="Sorelle R.P."/>
            <person name="Sutton A.E."/>
            <person name="Svatek A.F."/>
            <person name="Svetz L.A."/>
            <person name="Tamerisa K.S."/>
            <person name="Taylor T.R."/>
            <person name="Teague B."/>
            <person name="Thomas N."/>
            <person name="Thorn R.D."/>
            <person name="Trejos Z.Y."/>
            <person name="Trevino B.K."/>
            <person name="Ukegbu O.N."/>
            <person name="Urban J.B."/>
            <person name="Vasquez L.I."/>
            <person name="Vera V.A."/>
            <person name="Villasana D.M."/>
            <person name="Wang L."/>
            <person name="Ward-Moore S."/>
            <person name="Warren J.T."/>
            <person name="Wei X."/>
            <person name="White F."/>
            <person name="Williamson A.L."/>
            <person name="Wleczyk R."/>
            <person name="Wooden H.S."/>
            <person name="Wooden S.H."/>
            <person name="Yen J."/>
            <person name="Yoon L."/>
            <person name="Yoon V."/>
            <person name="Zorrilla S.E."/>
            <person name="Nelson D."/>
            <person name="Kucherlapati R."/>
            <person name="Weinstock G."/>
            <person name="Gibbs R.A."/>
        </authorList>
    </citation>
    <scope>NUCLEOTIDE SEQUENCE [LARGE SCALE GENOMIC DNA]</scope>
</reference>
<reference key="2">
    <citation type="submission" date="2005-09" db="EMBL/GenBank/DDBJ databases">
        <authorList>
            <person name="Mural R.J."/>
            <person name="Istrail S."/>
            <person name="Sutton G.G."/>
            <person name="Florea L."/>
            <person name="Halpern A.L."/>
            <person name="Mobarry C.M."/>
            <person name="Lippert R."/>
            <person name="Walenz B."/>
            <person name="Shatkay H."/>
            <person name="Dew I."/>
            <person name="Miller J.R."/>
            <person name="Flanigan M.J."/>
            <person name="Edwards N.J."/>
            <person name="Bolanos R."/>
            <person name="Fasulo D."/>
            <person name="Halldorsson B.V."/>
            <person name="Hannenhalli S."/>
            <person name="Turner R."/>
            <person name="Yooseph S."/>
            <person name="Lu F."/>
            <person name="Nusskern D.R."/>
            <person name="Shue B.C."/>
            <person name="Zheng X.H."/>
            <person name="Zhong F."/>
            <person name="Delcher A.L."/>
            <person name="Huson D.H."/>
            <person name="Kravitz S.A."/>
            <person name="Mouchard L."/>
            <person name="Reinert K."/>
            <person name="Remington K.A."/>
            <person name="Clark A.G."/>
            <person name="Waterman M.S."/>
            <person name="Eichler E.E."/>
            <person name="Adams M.D."/>
            <person name="Hunkapiller M.W."/>
            <person name="Myers E.W."/>
            <person name="Venter J.C."/>
        </authorList>
    </citation>
    <scope>NUCLEOTIDE SEQUENCE [LARGE SCALE GENOMIC DNA]</scope>
</reference>
<reference key="3">
    <citation type="journal article" date="2004" name="Genome Res.">
        <title>The status, quality, and expansion of the NIH full-length cDNA project: the Mammalian Gene Collection (MGC).</title>
        <authorList>
            <consortium name="The MGC Project Team"/>
        </authorList>
    </citation>
    <scope>NUCLEOTIDE SEQUENCE [LARGE SCALE MRNA]</scope>
    <source>
        <tissue>Placenta</tissue>
        <tissue>Uterus</tissue>
    </source>
</reference>
<reference key="4">
    <citation type="journal article" date="2004" name="Nat. Genet.">
        <title>Complete sequencing and characterization of 21,243 full-length human cDNAs.</title>
        <authorList>
            <person name="Ota T."/>
            <person name="Suzuki Y."/>
            <person name="Nishikawa T."/>
            <person name="Otsuki T."/>
            <person name="Sugiyama T."/>
            <person name="Irie R."/>
            <person name="Wakamatsu A."/>
            <person name="Hayashi K."/>
            <person name="Sato H."/>
            <person name="Nagai K."/>
            <person name="Kimura K."/>
            <person name="Makita H."/>
            <person name="Sekine M."/>
            <person name="Obayashi M."/>
            <person name="Nishi T."/>
            <person name="Shibahara T."/>
            <person name="Tanaka T."/>
            <person name="Ishii S."/>
            <person name="Yamamoto J."/>
            <person name="Saito K."/>
            <person name="Kawai Y."/>
            <person name="Isono Y."/>
            <person name="Nakamura Y."/>
            <person name="Nagahari K."/>
            <person name="Murakami K."/>
            <person name="Yasuda T."/>
            <person name="Iwayanagi T."/>
            <person name="Wagatsuma M."/>
            <person name="Shiratori A."/>
            <person name="Sudo H."/>
            <person name="Hosoiri T."/>
            <person name="Kaku Y."/>
            <person name="Kodaira H."/>
            <person name="Kondo H."/>
            <person name="Sugawara M."/>
            <person name="Takahashi M."/>
            <person name="Kanda K."/>
            <person name="Yokoi T."/>
            <person name="Furuya T."/>
            <person name="Kikkawa E."/>
            <person name="Omura Y."/>
            <person name="Abe K."/>
            <person name="Kamihara K."/>
            <person name="Katsuta N."/>
            <person name="Sato K."/>
            <person name="Tanikawa M."/>
            <person name="Yamazaki M."/>
            <person name="Ninomiya K."/>
            <person name="Ishibashi T."/>
            <person name="Yamashita H."/>
            <person name="Murakawa K."/>
            <person name="Fujimori K."/>
            <person name="Tanai H."/>
            <person name="Kimata M."/>
            <person name="Watanabe M."/>
            <person name="Hiraoka S."/>
            <person name="Chiba Y."/>
            <person name="Ishida S."/>
            <person name="Ono Y."/>
            <person name="Takiguchi S."/>
            <person name="Watanabe S."/>
            <person name="Yosida M."/>
            <person name="Hotuta T."/>
            <person name="Kusano J."/>
            <person name="Kanehori K."/>
            <person name="Takahashi-Fujii A."/>
            <person name="Hara H."/>
            <person name="Tanase T.-O."/>
            <person name="Nomura Y."/>
            <person name="Togiya S."/>
            <person name="Komai F."/>
            <person name="Hara R."/>
            <person name="Takeuchi K."/>
            <person name="Arita M."/>
            <person name="Imose N."/>
            <person name="Musashino K."/>
            <person name="Yuuki H."/>
            <person name="Oshima A."/>
            <person name="Sasaki N."/>
            <person name="Aotsuka S."/>
            <person name="Yoshikawa Y."/>
            <person name="Matsunawa H."/>
            <person name="Ichihara T."/>
            <person name="Shiohata N."/>
            <person name="Sano S."/>
            <person name="Moriya S."/>
            <person name="Momiyama H."/>
            <person name="Satoh N."/>
            <person name="Takami S."/>
            <person name="Terashima Y."/>
            <person name="Suzuki O."/>
            <person name="Nakagawa S."/>
            <person name="Senoh A."/>
            <person name="Mizoguchi H."/>
            <person name="Goto Y."/>
            <person name="Shimizu F."/>
            <person name="Wakebe H."/>
            <person name="Hishigaki H."/>
            <person name="Watanabe T."/>
            <person name="Sugiyama A."/>
            <person name="Takemoto M."/>
            <person name="Kawakami B."/>
            <person name="Yamazaki M."/>
            <person name="Watanabe K."/>
            <person name="Kumagai A."/>
            <person name="Itakura S."/>
            <person name="Fukuzumi Y."/>
            <person name="Fujimori Y."/>
            <person name="Komiyama M."/>
            <person name="Tashiro H."/>
            <person name="Tanigami A."/>
            <person name="Fujiwara T."/>
            <person name="Ono T."/>
            <person name="Yamada K."/>
            <person name="Fujii Y."/>
            <person name="Ozaki K."/>
            <person name="Hirao M."/>
            <person name="Ohmori Y."/>
            <person name="Kawabata A."/>
            <person name="Hikiji T."/>
            <person name="Kobatake N."/>
            <person name="Inagaki H."/>
            <person name="Ikema Y."/>
            <person name="Okamoto S."/>
            <person name="Okitani R."/>
            <person name="Kawakami T."/>
            <person name="Noguchi S."/>
            <person name="Itoh T."/>
            <person name="Shigeta K."/>
            <person name="Senba T."/>
            <person name="Matsumura K."/>
            <person name="Nakajima Y."/>
            <person name="Mizuno T."/>
            <person name="Morinaga M."/>
            <person name="Sasaki M."/>
            <person name="Togashi T."/>
            <person name="Oyama M."/>
            <person name="Hata H."/>
            <person name="Watanabe M."/>
            <person name="Komatsu T."/>
            <person name="Mizushima-Sugano J."/>
            <person name="Satoh T."/>
            <person name="Shirai Y."/>
            <person name="Takahashi Y."/>
            <person name="Nakagawa K."/>
            <person name="Okumura K."/>
            <person name="Nagase T."/>
            <person name="Nomura N."/>
            <person name="Kikuchi H."/>
            <person name="Masuho Y."/>
            <person name="Yamashita R."/>
            <person name="Nakai K."/>
            <person name="Yada T."/>
            <person name="Nakamura Y."/>
            <person name="Ohara O."/>
            <person name="Isogai T."/>
            <person name="Sugano S."/>
        </authorList>
    </citation>
    <scope>NUCLEOTIDE SEQUENCE [LARGE SCALE MRNA] OF 103-533</scope>
</reference>
<reference key="5">
    <citation type="submission" date="2003-05" db="EMBL/GenBank/DDBJ databases">
        <title>Cloning of human full-length CDSs in BD Creator(TM) system donor vector.</title>
        <authorList>
            <person name="Kalnine N."/>
            <person name="Chen X."/>
            <person name="Rolfs A."/>
            <person name="Halleck A."/>
            <person name="Hines L."/>
            <person name="Eisenstein S."/>
            <person name="Koundinya M."/>
            <person name="Raphael J."/>
            <person name="Moreira D."/>
            <person name="Kelley T."/>
            <person name="LaBaer J."/>
            <person name="Lin Y."/>
            <person name="Phelan M."/>
            <person name="Farmer A."/>
        </authorList>
    </citation>
    <scope>NUCLEOTIDE SEQUENCE [LARGE SCALE MRNA] OF 335-533</scope>
</reference>
<reference key="6">
    <citation type="journal article" date="1990" name="New Biol.">
        <title>Multiple genes encoding zinc finger domains are expressed in human T cells.</title>
        <authorList>
            <person name="Thiesen H.-J."/>
        </authorList>
    </citation>
    <scope>NUCLEOTIDE SEQUENCE [MRNA] OF 454-509</scope>
    <source>
        <tissue>Lymphoid tissue</tissue>
    </source>
</reference>
<dbReference type="EMBL" id="AC073911">
    <property type="status" value="NOT_ANNOTATED_CDS"/>
    <property type="molecule type" value="Genomic_DNA"/>
</dbReference>
<dbReference type="EMBL" id="CH471218">
    <property type="protein sequence ID" value="EAW54803.1"/>
    <property type="molecule type" value="Genomic_DNA"/>
</dbReference>
<dbReference type="EMBL" id="BC008211">
    <property type="protein sequence ID" value="AAH08211.1"/>
    <property type="status" value="ALT_INIT"/>
    <property type="molecule type" value="mRNA"/>
</dbReference>
<dbReference type="EMBL" id="BC046206">
    <property type="protein sequence ID" value="AAH46206.1"/>
    <property type="molecule type" value="mRNA"/>
</dbReference>
<dbReference type="EMBL" id="AK000762">
    <property type="protein sequence ID" value="BAA91367.1"/>
    <property type="status" value="ALT_INIT"/>
    <property type="molecule type" value="mRNA"/>
</dbReference>
<dbReference type="EMBL" id="BT006963">
    <property type="protein sequence ID" value="AAP35609.1"/>
    <property type="molecule type" value="mRNA"/>
</dbReference>
<dbReference type="EMBL" id="X52351">
    <property type="protein sequence ID" value="CAA36577.1"/>
    <property type="molecule type" value="mRNA"/>
</dbReference>
<dbReference type="CCDS" id="CCDS31939.1"/>
<dbReference type="PIR" id="I37960">
    <property type="entry name" value="I37960"/>
</dbReference>
<dbReference type="RefSeq" id="NP_062537.2">
    <property type="nucleotide sequence ID" value="NM_019591.3"/>
</dbReference>
<dbReference type="SMR" id="P17031"/>
<dbReference type="BioGRID" id="113404">
    <property type="interactions" value="13"/>
</dbReference>
<dbReference type="FunCoup" id="P17031">
    <property type="interactions" value="612"/>
</dbReference>
<dbReference type="IntAct" id="P17031">
    <property type="interactions" value="11"/>
</dbReference>
<dbReference type="STRING" id="9606.ENSP00000333725"/>
<dbReference type="iPTMnet" id="P17031"/>
<dbReference type="PhosphoSitePlus" id="P17031"/>
<dbReference type="BioMuta" id="ZNF26"/>
<dbReference type="DMDM" id="215274195"/>
<dbReference type="jPOST" id="P17031"/>
<dbReference type="MassIVE" id="P17031"/>
<dbReference type="PaxDb" id="9606-ENSP00000333725"/>
<dbReference type="PeptideAtlas" id="P17031"/>
<dbReference type="ProteomicsDB" id="53434"/>
<dbReference type="Antibodypedia" id="19533">
    <property type="antibodies" value="46 antibodies from 11 providers"/>
</dbReference>
<dbReference type="DNASU" id="7574"/>
<dbReference type="Ensembl" id="ENST00000328654.10">
    <property type="protein sequence ID" value="ENSP00000333725.5"/>
    <property type="gene ID" value="ENSG00000198393.8"/>
</dbReference>
<dbReference type="GeneID" id="7574"/>
<dbReference type="KEGG" id="hsa:7574"/>
<dbReference type="MANE-Select" id="ENST00000328654.10">
    <property type="protein sequence ID" value="ENSP00000333725.5"/>
    <property type="RefSeq nucleotide sequence ID" value="NM_019591.4"/>
    <property type="RefSeq protein sequence ID" value="NP_062537.2"/>
</dbReference>
<dbReference type="AGR" id="HGNC:13053"/>
<dbReference type="CTD" id="7574"/>
<dbReference type="DisGeNET" id="7574"/>
<dbReference type="GeneCards" id="ZNF26"/>
<dbReference type="HGNC" id="HGNC:13053">
    <property type="gene designation" value="ZNF26"/>
</dbReference>
<dbReference type="HPA" id="ENSG00000198393">
    <property type="expression patterns" value="Low tissue specificity"/>
</dbReference>
<dbReference type="MIM" id="194537">
    <property type="type" value="gene"/>
</dbReference>
<dbReference type="neXtProt" id="NX_P17031"/>
<dbReference type="OpenTargets" id="ENSG00000198393"/>
<dbReference type="PharmGKB" id="PA37631"/>
<dbReference type="VEuPathDB" id="HostDB:ENSG00000198393"/>
<dbReference type="eggNOG" id="KOG1721">
    <property type="taxonomic scope" value="Eukaryota"/>
</dbReference>
<dbReference type="GeneTree" id="ENSGT00940000162734"/>
<dbReference type="InParanoid" id="P17031"/>
<dbReference type="OMA" id="INAKMST"/>
<dbReference type="OrthoDB" id="9411774at2759"/>
<dbReference type="PAN-GO" id="P17031">
    <property type="GO annotations" value="4 GO annotations based on evolutionary models"/>
</dbReference>
<dbReference type="PhylomeDB" id="P17031"/>
<dbReference type="TreeFam" id="TF340593"/>
<dbReference type="PathwayCommons" id="P17031"/>
<dbReference type="Reactome" id="R-HSA-212436">
    <property type="pathway name" value="Generic Transcription Pathway"/>
</dbReference>
<dbReference type="SignaLink" id="P17031"/>
<dbReference type="BioGRID-ORCS" id="7574">
    <property type="hits" value="16 hits in 1167 CRISPR screens"/>
</dbReference>
<dbReference type="ChiTaRS" id="ZNF26">
    <property type="organism name" value="human"/>
</dbReference>
<dbReference type="GenomeRNAi" id="7574"/>
<dbReference type="Pharos" id="P17031">
    <property type="development level" value="Tdark"/>
</dbReference>
<dbReference type="PRO" id="PR:P17031"/>
<dbReference type="Proteomes" id="UP000005640">
    <property type="component" value="Chromosome 12"/>
</dbReference>
<dbReference type="RNAct" id="P17031">
    <property type="molecule type" value="protein"/>
</dbReference>
<dbReference type="Bgee" id="ENSG00000198393">
    <property type="expression patterns" value="Expressed in endothelial cell and 174 other cell types or tissues"/>
</dbReference>
<dbReference type="ExpressionAtlas" id="P17031">
    <property type="expression patterns" value="baseline and differential"/>
</dbReference>
<dbReference type="GO" id="GO:0005634">
    <property type="term" value="C:nucleus"/>
    <property type="evidence" value="ECO:0007669"/>
    <property type="project" value="UniProtKB-SubCell"/>
</dbReference>
<dbReference type="GO" id="GO:0003677">
    <property type="term" value="F:DNA binding"/>
    <property type="evidence" value="ECO:0007669"/>
    <property type="project" value="UniProtKB-KW"/>
</dbReference>
<dbReference type="GO" id="GO:0008270">
    <property type="term" value="F:zinc ion binding"/>
    <property type="evidence" value="ECO:0007669"/>
    <property type="project" value="UniProtKB-KW"/>
</dbReference>
<dbReference type="GO" id="GO:0006355">
    <property type="term" value="P:regulation of DNA-templated transcription"/>
    <property type="evidence" value="ECO:0007669"/>
    <property type="project" value="InterPro"/>
</dbReference>
<dbReference type="CDD" id="cd07765">
    <property type="entry name" value="KRAB_A-box"/>
    <property type="match status" value="1"/>
</dbReference>
<dbReference type="FunFam" id="3.30.160.60:FF:000295">
    <property type="entry name" value="zinc finger protein 19"/>
    <property type="match status" value="2"/>
</dbReference>
<dbReference type="FunFam" id="3.30.160.60:FF:000171">
    <property type="entry name" value="Zinc finger protein 26"/>
    <property type="match status" value="1"/>
</dbReference>
<dbReference type="FunFam" id="3.30.160.60:FF:000671">
    <property type="entry name" value="Zinc finger protein 26"/>
    <property type="match status" value="1"/>
</dbReference>
<dbReference type="FunFam" id="3.30.160.60:FF:000569">
    <property type="entry name" value="zinc finger protein 26 isoform X1"/>
    <property type="match status" value="2"/>
</dbReference>
<dbReference type="FunFam" id="3.30.160.60:FF:000622">
    <property type="entry name" value="zinc finger protein 26 isoform X3"/>
    <property type="match status" value="2"/>
</dbReference>
<dbReference type="FunFam" id="3.30.160.60:FF:000128">
    <property type="entry name" value="zinc finger protein 268 isoform X1"/>
    <property type="match status" value="3"/>
</dbReference>
<dbReference type="FunFam" id="3.30.160.60:FF:002343">
    <property type="entry name" value="Zinc finger protein 33A"/>
    <property type="match status" value="2"/>
</dbReference>
<dbReference type="Gene3D" id="6.10.140.140">
    <property type="match status" value="1"/>
</dbReference>
<dbReference type="Gene3D" id="3.30.160.60">
    <property type="entry name" value="Classic Zinc Finger"/>
    <property type="match status" value="13"/>
</dbReference>
<dbReference type="InterPro" id="IPR001909">
    <property type="entry name" value="KRAB"/>
</dbReference>
<dbReference type="InterPro" id="IPR036051">
    <property type="entry name" value="KRAB_dom_sf"/>
</dbReference>
<dbReference type="InterPro" id="IPR036236">
    <property type="entry name" value="Znf_C2H2_sf"/>
</dbReference>
<dbReference type="InterPro" id="IPR013087">
    <property type="entry name" value="Znf_C2H2_type"/>
</dbReference>
<dbReference type="PANTHER" id="PTHR24393">
    <property type="entry name" value="ZINC FINGER PROTEIN"/>
    <property type="match status" value="1"/>
</dbReference>
<dbReference type="PANTHER" id="PTHR24393:SF139">
    <property type="entry name" value="ZINC FINGER PROTEIN 615"/>
    <property type="match status" value="1"/>
</dbReference>
<dbReference type="Pfam" id="PF01352">
    <property type="entry name" value="KRAB"/>
    <property type="match status" value="1"/>
</dbReference>
<dbReference type="Pfam" id="PF00096">
    <property type="entry name" value="zf-C2H2"/>
    <property type="match status" value="13"/>
</dbReference>
<dbReference type="SMART" id="SM00349">
    <property type="entry name" value="KRAB"/>
    <property type="match status" value="1"/>
</dbReference>
<dbReference type="SMART" id="SM00355">
    <property type="entry name" value="ZnF_C2H2"/>
    <property type="match status" value="13"/>
</dbReference>
<dbReference type="SUPFAM" id="SSF57667">
    <property type="entry name" value="beta-beta-alpha zinc fingers"/>
    <property type="match status" value="7"/>
</dbReference>
<dbReference type="SUPFAM" id="SSF109640">
    <property type="entry name" value="KRAB domain (Kruppel-associated box)"/>
    <property type="match status" value="1"/>
</dbReference>
<dbReference type="PROSITE" id="PS50805">
    <property type="entry name" value="KRAB"/>
    <property type="match status" value="1"/>
</dbReference>
<dbReference type="PROSITE" id="PS00028">
    <property type="entry name" value="ZINC_FINGER_C2H2_1"/>
    <property type="match status" value="13"/>
</dbReference>
<dbReference type="PROSITE" id="PS50157">
    <property type="entry name" value="ZINC_FINGER_C2H2_2"/>
    <property type="match status" value="13"/>
</dbReference>
<accession>P17031</accession>
<accession>Q86X57</accession>
<accession>Q9NWL3</accession>
<protein>
    <recommendedName>
        <fullName>Zinc finger protein 26</fullName>
    </recommendedName>
    <alternativeName>
        <fullName>Zinc finger protein KOX20</fullName>
    </alternativeName>
</protein>
<gene>
    <name type="primary">ZNF26</name>
    <name type="synonym">KOX20</name>
</gene>
<name>ZNF26_HUMAN</name>
<organism>
    <name type="scientific">Homo sapiens</name>
    <name type="common">Human</name>
    <dbReference type="NCBI Taxonomy" id="9606"/>
    <lineage>
        <taxon>Eukaryota</taxon>
        <taxon>Metazoa</taxon>
        <taxon>Chordata</taxon>
        <taxon>Craniata</taxon>
        <taxon>Vertebrata</taxon>
        <taxon>Euteleostomi</taxon>
        <taxon>Mammalia</taxon>
        <taxon>Eutheria</taxon>
        <taxon>Euarchontoglires</taxon>
        <taxon>Primates</taxon>
        <taxon>Haplorrhini</taxon>
        <taxon>Catarrhini</taxon>
        <taxon>Hominidae</taxon>
        <taxon>Homo</taxon>
    </lineage>
</organism>
<feature type="chain" id="PRO_0000047355" description="Zinc finger protein 26">
    <location>
        <begin position="1"/>
        <end position="533"/>
    </location>
</feature>
<feature type="domain" description="KRAB" evidence="2">
    <location>
        <begin position="14"/>
        <end position="85"/>
    </location>
</feature>
<feature type="zinc finger region" description="C2H2-type 1" evidence="1">
    <location>
        <begin position="174"/>
        <end position="196"/>
    </location>
</feature>
<feature type="zinc finger region" description="C2H2-type 2" evidence="1">
    <location>
        <begin position="202"/>
        <end position="224"/>
    </location>
</feature>
<feature type="zinc finger region" description="C2H2-type 3" evidence="1">
    <location>
        <begin position="230"/>
        <end position="252"/>
    </location>
</feature>
<feature type="zinc finger region" description="C2H2-type 4" evidence="1">
    <location>
        <begin position="258"/>
        <end position="280"/>
    </location>
</feature>
<feature type="zinc finger region" description="C2H2-type 5" evidence="1">
    <location>
        <begin position="286"/>
        <end position="308"/>
    </location>
</feature>
<feature type="zinc finger region" description="C2H2-type 6" evidence="1">
    <location>
        <begin position="314"/>
        <end position="336"/>
    </location>
</feature>
<feature type="zinc finger region" description="C2H2-type 7" evidence="1">
    <location>
        <begin position="342"/>
        <end position="364"/>
    </location>
</feature>
<feature type="zinc finger region" description="C2H2-type 8" evidence="1">
    <location>
        <begin position="370"/>
        <end position="392"/>
    </location>
</feature>
<feature type="zinc finger region" description="C2H2-type 9" evidence="1">
    <location>
        <begin position="398"/>
        <end position="420"/>
    </location>
</feature>
<feature type="zinc finger region" description="C2H2-type 10" evidence="1">
    <location>
        <begin position="426"/>
        <end position="448"/>
    </location>
</feature>
<feature type="zinc finger region" description="C2H2-type 11" evidence="1">
    <location>
        <begin position="454"/>
        <end position="476"/>
    </location>
</feature>
<feature type="zinc finger region" description="C2H2-type 12" evidence="1">
    <location>
        <begin position="482"/>
        <end position="504"/>
    </location>
</feature>
<feature type="zinc finger region" description="C2H2-type 13" evidence="1">
    <location>
        <begin position="510"/>
        <end position="532"/>
    </location>
</feature>
<evidence type="ECO:0000255" key="1">
    <source>
        <dbReference type="PROSITE-ProRule" id="PRU00042"/>
    </source>
</evidence>
<evidence type="ECO:0000255" key="2">
    <source>
        <dbReference type="PROSITE-ProRule" id="PRU00119"/>
    </source>
</evidence>
<evidence type="ECO:0000305" key="3"/>
<comment type="function">
    <text>May be involved in transcriptional regulation.</text>
</comment>
<comment type="interaction">
    <interactant intactId="EBI-2841331">
        <id>P17031</id>
    </interactant>
    <interactant intactId="EBI-10171697">
        <id>Q6A162</id>
        <label>KRT40</label>
    </interactant>
    <organismsDiffer>false</organismsDiffer>
    <experiments>3</experiments>
</comment>
<comment type="interaction">
    <interactant intactId="EBI-2841331">
        <id>P17031</id>
    </interactant>
    <interactant intactId="EBI-10172290">
        <id>P60409</id>
        <label>KRTAP10-7</label>
    </interactant>
    <organismsDiffer>false</organismsDiffer>
    <experiments>3</experiments>
</comment>
<comment type="interaction">
    <interactant intactId="EBI-2841331">
        <id>P17031</id>
    </interactant>
    <interactant intactId="EBI-10175039">
        <id>Q13625-3</id>
        <label>TP53BP2</label>
    </interactant>
    <organismsDiffer>false</organismsDiffer>
    <experiments>5</experiments>
</comment>
<comment type="interaction">
    <interactant intactId="EBI-2841331">
        <id>P17031</id>
    </interactant>
    <interactant intactId="EBI-739510">
        <id>Q9HCM9</id>
        <label>TRIM39</label>
    </interactant>
    <organismsDiffer>false</organismsDiffer>
    <experiments>4</experiments>
</comment>
<comment type="interaction">
    <interactant intactId="EBI-2841331">
        <id>P17031</id>
    </interactant>
    <interactant intactId="EBI-725997">
        <id>Q8WV44</id>
        <label>TRIM41</label>
    </interactant>
    <organismsDiffer>false</organismsDiffer>
    <experiments>3</experiments>
</comment>
<comment type="subcellular location">
    <subcellularLocation>
        <location evidence="3">Nucleus</location>
    </subcellularLocation>
</comment>
<comment type="similarity">
    <text evidence="3">Belongs to the krueppel C2H2-type zinc-finger protein family.</text>
</comment>
<comment type="sequence caution" evidence="3">
    <conflict type="erroneous initiation">
        <sequence resource="EMBL-CDS" id="AAH08211"/>
    </conflict>
</comment>
<comment type="sequence caution" evidence="3">
    <conflict type="erroneous initiation">
        <sequence resource="EMBL-CDS" id="BAA91367"/>
    </conflict>
</comment>
<proteinExistence type="evidence at protein level"/>